<feature type="chain" id="PRO_0000240098" description="NADH-quinone oxidoreductase subunit H">
    <location>
        <begin position="1"/>
        <end position="335"/>
    </location>
</feature>
<feature type="transmembrane region" description="Helical" evidence="1">
    <location>
        <begin position="11"/>
        <end position="31"/>
    </location>
</feature>
<feature type="transmembrane region" description="Helical" evidence="1">
    <location>
        <begin position="81"/>
        <end position="101"/>
    </location>
</feature>
<feature type="transmembrane region" description="Helical" evidence="1">
    <location>
        <begin position="114"/>
        <end position="134"/>
    </location>
</feature>
<feature type="transmembrane region" description="Helical" evidence="1">
    <location>
        <begin position="154"/>
        <end position="174"/>
    </location>
</feature>
<feature type="transmembrane region" description="Helical" evidence="1">
    <location>
        <begin position="187"/>
        <end position="207"/>
    </location>
</feature>
<feature type="transmembrane region" description="Helical" evidence="1">
    <location>
        <begin position="238"/>
        <end position="258"/>
    </location>
</feature>
<feature type="transmembrane region" description="Helical" evidence="1">
    <location>
        <begin position="270"/>
        <end position="290"/>
    </location>
</feature>
<feature type="transmembrane region" description="Helical" evidence="1">
    <location>
        <begin position="307"/>
        <end position="327"/>
    </location>
</feature>
<proteinExistence type="inferred from homology"/>
<name>NUOH_PSEF5</name>
<reference key="1">
    <citation type="journal article" date="2005" name="Nat. Biotechnol.">
        <title>Complete genome sequence of the plant commensal Pseudomonas fluorescens Pf-5.</title>
        <authorList>
            <person name="Paulsen I.T."/>
            <person name="Press C.M."/>
            <person name="Ravel J."/>
            <person name="Kobayashi D.Y."/>
            <person name="Myers G.S.A."/>
            <person name="Mavrodi D.V."/>
            <person name="DeBoy R.T."/>
            <person name="Seshadri R."/>
            <person name="Ren Q."/>
            <person name="Madupu R."/>
            <person name="Dodson R.J."/>
            <person name="Durkin A.S."/>
            <person name="Brinkac L.M."/>
            <person name="Daugherty S.C."/>
            <person name="Sullivan S.A."/>
            <person name="Rosovitz M.J."/>
            <person name="Gwinn M.L."/>
            <person name="Zhou L."/>
            <person name="Schneider D.J."/>
            <person name="Cartinhour S.W."/>
            <person name="Nelson W.C."/>
            <person name="Weidman J."/>
            <person name="Watkins K."/>
            <person name="Tran K."/>
            <person name="Khouri H."/>
            <person name="Pierson E.A."/>
            <person name="Pierson L.S. III"/>
            <person name="Thomashow L.S."/>
            <person name="Loper J.E."/>
        </authorList>
    </citation>
    <scope>NUCLEOTIDE SEQUENCE [LARGE SCALE GENOMIC DNA]</scope>
    <source>
        <strain>ATCC BAA-477 / NRRL B-23932 / Pf-5</strain>
    </source>
</reference>
<accession>Q4K9T0</accession>
<keyword id="KW-0997">Cell inner membrane</keyword>
<keyword id="KW-1003">Cell membrane</keyword>
<keyword id="KW-0472">Membrane</keyword>
<keyword id="KW-0520">NAD</keyword>
<keyword id="KW-0874">Quinone</keyword>
<keyword id="KW-1278">Translocase</keyword>
<keyword id="KW-0812">Transmembrane</keyword>
<keyword id="KW-1133">Transmembrane helix</keyword>
<keyword id="KW-0830">Ubiquinone</keyword>
<protein>
    <recommendedName>
        <fullName evidence="1">NADH-quinone oxidoreductase subunit H</fullName>
        <ecNumber evidence="1">7.1.1.-</ecNumber>
    </recommendedName>
    <alternativeName>
        <fullName evidence="1">NADH dehydrogenase I subunit H</fullName>
    </alternativeName>
    <alternativeName>
        <fullName evidence="1">NDH-1 subunit H</fullName>
    </alternativeName>
</protein>
<evidence type="ECO:0000255" key="1">
    <source>
        <dbReference type="HAMAP-Rule" id="MF_01350"/>
    </source>
</evidence>
<sequence length="335" mass="37562">MSWFTPEVIDVILTVVKAIVILLAVVIAGALLSFVERRLLGWWQDRYGPNRVGPFGMFQIAADMLKMFFKEDWTPPFADKVIFTLAPVVAMSALLIAFAIIPITPTWGVADLNIGLLFFFAMAGLSVYAVLFAGWSSNNKFALLGSLRASAQTVSYEVFMGLALMGIVVQVGSFNMRDIVEYQAQNLWFIIPQFFGFCTFFIAGVAVTHRHPFDQPEAEQELADGYHIEYAGMKWGMFFVGEYIGIILISALLVTLFFGGWHGPFGILPQLSFVWFALKTAFFIMLFILLRASIPRPRYDQVMDFSWKFCLPLTLINLLITAAVVLWNTPAVAVQ</sequence>
<organism>
    <name type="scientific">Pseudomonas fluorescens (strain ATCC BAA-477 / NRRL B-23932 / Pf-5)</name>
    <dbReference type="NCBI Taxonomy" id="220664"/>
    <lineage>
        <taxon>Bacteria</taxon>
        <taxon>Pseudomonadati</taxon>
        <taxon>Pseudomonadota</taxon>
        <taxon>Gammaproteobacteria</taxon>
        <taxon>Pseudomonadales</taxon>
        <taxon>Pseudomonadaceae</taxon>
        <taxon>Pseudomonas</taxon>
    </lineage>
</organism>
<comment type="function">
    <text evidence="1">NDH-1 shuttles electrons from NADH, via FMN and iron-sulfur (Fe-S) centers, to quinones in the respiratory chain. The immediate electron acceptor for the enzyme in this species is believed to be ubiquinone. Couples the redox reaction to proton translocation (for every two electrons transferred, four hydrogen ions are translocated across the cytoplasmic membrane), and thus conserves the redox energy in a proton gradient. This subunit may bind ubiquinone.</text>
</comment>
<comment type="catalytic activity">
    <reaction evidence="1">
        <text>a quinone + NADH + 5 H(+)(in) = a quinol + NAD(+) + 4 H(+)(out)</text>
        <dbReference type="Rhea" id="RHEA:57888"/>
        <dbReference type="ChEBI" id="CHEBI:15378"/>
        <dbReference type="ChEBI" id="CHEBI:24646"/>
        <dbReference type="ChEBI" id="CHEBI:57540"/>
        <dbReference type="ChEBI" id="CHEBI:57945"/>
        <dbReference type="ChEBI" id="CHEBI:132124"/>
    </reaction>
</comment>
<comment type="subunit">
    <text evidence="1">NDH-1 is composed of 13 different subunits. Subunits NuoA, H, J, K, L, M, N constitute the membrane sector of the complex.</text>
</comment>
<comment type="subcellular location">
    <subcellularLocation>
        <location evidence="1">Cell inner membrane</location>
        <topology evidence="1">Multi-pass membrane protein</topology>
    </subcellularLocation>
</comment>
<comment type="similarity">
    <text evidence="1">Belongs to the complex I subunit 1 family.</text>
</comment>
<dbReference type="EC" id="7.1.1.-" evidence="1"/>
<dbReference type="EMBL" id="CP000076">
    <property type="protein sequence ID" value="AAY93167.1"/>
    <property type="molecule type" value="Genomic_DNA"/>
</dbReference>
<dbReference type="RefSeq" id="WP_011062191.1">
    <property type="nucleotide sequence ID" value="NC_004129.6"/>
</dbReference>
<dbReference type="SMR" id="Q4K9T0"/>
<dbReference type="STRING" id="220664.PFL_3903"/>
<dbReference type="GeneID" id="57476971"/>
<dbReference type="KEGG" id="pfl:PFL_3903"/>
<dbReference type="PATRIC" id="fig|220664.5.peg.4000"/>
<dbReference type="eggNOG" id="COG1005">
    <property type="taxonomic scope" value="Bacteria"/>
</dbReference>
<dbReference type="HOGENOM" id="CLU_015134_0_1_6"/>
<dbReference type="Proteomes" id="UP000008540">
    <property type="component" value="Chromosome"/>
</dbReference>
<dbReference type="GO" id="GO:0005886">
    <property type="term" value="C:plasma membrane"/>
    <property type="evidence" value="ECO:0007669"/>
    <property type="project" value="UniProtKB-SubCell"/>
</dbReference>
<dbReference type="GO" id="GO:0003954">
    <property type="term" value="F:NADH dehydrogenase activity"/>
    <property type="evidence" value="ECO:0007669"/>
    <property type="project" value="TreeGrafter"/>
</dbReference>
<dbReference type="GO" id="GO:0016655">
    <property type="term" value="F:oxidoreductase activity, acting on NAD(P)H, quinone or similar compound as acceptor"/>
    <property type="evidence" value="ECO:0007669"/>
    <property type="project" value="UniProtKB-UniRule"/>
</dbReference>
<dbReference type="GO" id="GO:0048038">
    <property type="term" value="F:quinone binding"/>
    <property type="evidence" value="ECO:0007669"/>
    <property type="project" value="UniProtKB-KW"/>
</dbReference>
<dbReference type="GO" id="GO:0009060">
    <property type="term" value="P:aerobic respiration"/>
    <property type="evidence" value="ECO:0007669"/>
    <property type="project" value="TreeGrafter"/>
</dbReference>
<dbReference type="HAMAP" id="MF_01350">
    <property type="entry name" value="NDH1_NuoH"/>
    <property type="match status" value="1"/>
</dbReference>
<dbReference type="InterPro" id="IPR001694">
    <property type="entry name" value="NADH_UbQ_OxRdtase_su1/FPO"/>
</dbReference>
<dbReference type="InterPro" id="IPR018086">
    <property type="entry name" value="NADH_UbQ_OxRdtase_su1_CS"/>
</dbReference>
<dbReference type="NCBIfam" id="NF004740">
    <property type="entry name" value="PRK06076.1-1"/>
    <property type="match status" value="1"/>
</dbReference>
<dbReference type="NCBIfam" id="NF004741">
    <property type="entry name" value="PRK06076.1-2"/>
    <property type="match status" value="1"/>
</dbReference>
<dbReference type="PANTHER" id="PTHR11432">
    <property type="entry name" value="NADH DEHYDROGENASE SUBUNIT 1"/>
    <property type="match status" value="1"/>
</dbReference>
<dbReference type="PANTHER" id="PTHR11432:SF3">
    <property type="entry name" value="NADH-UBIQUINONE OXIDOREDUCTASE CHAIN 1"/>
    <property type="match status" value="1"/>
</dbReference>
<dbReference type="Pfam" id="PF00146">
    <property type="entry name" value="NADHdh"/>
    <property type="match status" value="1"/>
</dbReference>
<dbReference type="PROSITE" id="PS00667">
    <property type="entry name" value="COMPLEX1_ND1_1"/>
    <property type="match status" value="1"/>
</dbReference>
<dbReference type="PROSITE" id="PS00668">
    <property type="entry name" value="COMPLEX1_ND1_2"/>
    <property type="match status" value="1"/>
</dbReference>
<gene>
    <name evidence="1" type="primary">nuoH</name>
    <name type="ordered locus">PFL_3903</name>
</gene>